<sequence length="380" mass="41552">MADKAFHTRLINMRRDLHEHPELSFQEVETTKKIRRWLEEEQIEILDVPQLKTGVIAEIKGREDGPVIAIRADIDALPIQEQTNLPFASKVDGTMHACGHDFHTASIIGTAMLLNQRRAELKGTVRFIFQPAEEIAAGARKVLEAGVLNGVSAIFGMHNKPDLPVGTIGVKEGPLMASVDRFEIVIKGKGGHAGIPNNSIDPIAAAGQIISGLQSVVSRNISSLQNAVVSITRVQAGTSWNVIPDQAEMEGTVRTFQKEARQAVPEHMRRVAEGIAAGYGAQAEFKWFPYLPSVQNDGTFLNAASEAAARLGYQTVHAEQSPGGEDFALYQEKIPGFFVWMGTNGTEEWHHPAFTLDEEALTVASQYFAELAVIVLETIK</sequence>
<keyword id="KW-0002">3D-structure</keyword>
<keyword id="KW-0028">Amino-acid biosynthesis</keyword>
<keyword id="KW-0198">Cysteine biosynthesis</keyword>
<keyword id="KW-0378">Hydrolase</keyword>
<keyword id="KW-0479">Metal-binding</keyword>
<keyword id="KW-0533">Nickel</keyword>
<keyword id="KW-1185">Reference proteome</keyword>
<protein>
    <recommendedName>
        <fullName evidence="3">N-acetylcysteine deacetylase</fullName>
        <ecNumber evidence="5">3.5.1.-</ecNumber>
    </recommendedName>
    <alternativeName>
        <fullName evidence="3">S-(2-succino)cysteine metabolism operon protein P</fullName>
    </alternativeName>
</protein>
<name>SCMP_BACSU</name>
<organism>
    <name type="scientific">Bacillus subtilis (strain 168)</name>
    <dbReference type="NCBI Taxonomy" id="224308"/>
    <lineage>
        <taxon>Bacteria</taxon>
        <taxon>Bacillati</taxon>
        <taxon>Bacillota</taxon>
        <taxon>Bacilli</taxon>
        <taxon>Bacillales</taxon>
        <taxon>Bacillaceae</taxon>
        <taxon>Bacillus</taxon>
    </lineage>
</organism>
<dbReference type="EC" id="3.5.1.-" evidence="5"/>
<dbReference type="EMBL" id="D45912">
    <property type="protein sequence ID" value="BAA08332.1"/>
    <property type="molecule type" value="Genomic_DNA"/>
</dbReference>
<dbReference type="EMBL" id="AL009126">
    <property type="protein sequence ID" value="CAB15983.2"/>
    <property type="molecule type" value="Genomic_DNA"/>
</dbReference>
<dbReference type="PIR" id="B70076">
    <property type="entry name" value="B70076"/>
</dbReference>
<dbReference type="RefSeq" id="NP_391826.2">
    <property type="nucleotide sequence ID" value="NC_000964.3"/>
</dbReference>
<dbReference type="RefSeq" id="WP_003243840.1">
    <property type="nucleotide sequence ID" value="NZ_OZ025638.1"/>
</dbReference>
<dbReference type="PDB" id="1YSJ">
    <property type="method" value="X-ray"/>
    <property type="resolution" value="2.40 A"/>
    <property type="chains" value="A/B=1-380"/>
</dbReference>
<dbReference type="PDBsum" id="1YSJ"/>
<dbReference type="SMR" id="P54955"/>
<dbReference type="FunCoup" id="P54955">
    <property type="interactions" value="277"/>
</dbReference>
<dbReference type="STRING" id="224308.BSU39470"/>
<dbReference type="MEROPS" id="M20.015"/>
<dbReference type="PaxDb" id="224308-BSU39470"/>
<dbReference type="DNASU" id="937572"/>
<dbReference type="EnsemblBacteria" id="CAB15983">
    <property type="protein sequence ID" value="CAB15983"/>
    <property type="gene ID" value="BSU_39470"/>
</dbReference>
<dbReference type="GeneID" id="937572"/>
<dbReference type="KEGG" id="bsu:BSU39470"/>
<dbReference type="PATRIC" id="fig|224308.179.peg.4272"/>
<dbReference type="eggNOG" id="COG1473">
    <property type="taxonomic scope" value="Bacteria"/>
</dbReference>
<dbReference type="InParanoid" id="P54955"/>
<dbReference type="OrthoDB" id="9776731at2"/>
<dbReference type="PhylomeDB" id="P54955"/>
<dbReference type="BioCyc" id="BSUB:BSU39470-MONOMER"/>
<dbReference type="BioCyc" id="MetaCyc:BSU39470-MONOMER"/>
<dbReference type="UniPathway" id="UPA00136"/>
<dbReference type="EvolutionaryTrace" id="P54955"/>
<dbReference type="Proteomes" id="UP000001570">
    <property type="component" value="Chromosome"/>
</dbReference>
<dbReference type="GO" id="GO:0016787">
    <property type="term" value="F:hydrolase activity"/>
    <property type="evidence" value="ECO:0000318"/>
    <property type="project" value="GO_Central"/>
</dbReference>
<dbReference type="GO" id="GO:0046872">
    <property type="term" value="F:metal ion binding"/>
    <property type="evidence" value="ECO:0007669"/>
    <property type="project" value="UniProtKB-KW"/>
</dbReference>
<dbReference type="GO" id="GO:0019344">
    <property type="term" value="P:cysteine biosynthetic process"/>
    <property type="evidence" value="ECO:0007669"/>
    <property type="project" value="UniProtKB-UniPathway"/>
</dbReference>
<dbReference type="CDD" id="cd05669">
    <property type="entry name" value="M20_Acy1_YxeP-like"/>
    <property type="match status" value="1"/>
</dbReference>
<dbReference type="FunFam" id="3.30.70.360:FF:000001">
    <property type="entry name" value="N-acetyldiaminopimelate deacetylase"/>
    <property type="match status" value="1"/>
</dbReference>
<dbReference type="FunFam" id="3.40.630.10:FF:000006">
    <property type="entry name" value="N-acetyldiaminopimelate deacetylase"/>
    <property type="match status" value="1"/>
</dbReference>
<dbReference type="Gene3D" id="3.30.70.360">
    <property type="match status" value="1"/>
</dbReference>
<dbReference type="Gene3D" id="3.40.630.10">
    <property type="entry name" value="Zn peptidases"/>
    <property type="match status" value="1"/>
</dbReference>
<dbReference type="InterPro" id="IPR017439">
    <property type="entry name" value="Amidohydrolase"/>
</dbReference>
<dbReference type="InterPro" id="IPR036264">
    <property type="entry name" value="Bact_exopeptidase_dim_dom"/>
</dbReference>
<dbReference type="InterPro" id="IPR002933">
    <property type="entry name" value="Peptidase_M20"/>
</dbReference>
<dbReference type="InterPro" id="IPR011650">
    <property type="entry name" value="Peptidase_M20_dimer"/>
</dbReference>
<dbReference type="InterPro" id="IPR033846">
    <property type="entry name" value="YxeP-like"/>
</dbReference>
<dbReference type="NCBIfam" id="TIGR01891">
    <property type="entry name" value="amidohydrolases"/>
    <property type="match status" value="1"/>
</dbReference>
<dbReference type="PANTHER" id="PTHR11014:SF63">
    <property type="entry name" value="METALLOPEPTIDASE, PUTATIVE (AFU_ORTHOLOGUE AFUA_6G09600)-RELATED"/>
    <property type="match status" value="1"/>
</dbReference>
<dbReference type="PANTHER" id="PTHR11014">
    <property type="entry name" value="PEPTIDASE M20 FAMILY MEMBER"/>
    <property type="match status" value="1"/>
</dbReference>
<dbReference type="Pfam" id="PF07687">
    <property type="entry name" value="M20_dimer"/>
    <property type="match status" value="1"/>
</dbReference>
<dbReference type="Pfam" id="PF01546">
    <property type="entry name" value="Peptidase_M20"/>
    <property type="match status" value="1"/>
</dbReference>
<dbReference type="PIRSF" id="PIRSF005962">
    <property type="entry name" value="Pept_M20D_amidohydro"/>
    <property type="match status" value="1"/>
</dbReference>
<dbReference type="SUPFAM" id="SSF55031">
    <property type="entry name" value="Bacterial exopeptidase dimerisation domain"/>
    <property type="match status" value="1"/>
</dbReference>
<dbReference type="SUPFAM" id="SSF53187">
    <property type="entry name" value="Zn-dependent exopeptidases"/>
    <property type="match status" value="1"/>
</dbReference>
<evidence type="ECO:0000269" key="1">
    <source>
    </source>
</evidence>
<evidence type="ECO:0000269" key="2">
    <source ref="5"/>
</evidence>
<evidence type="ECO:0000303" key="3">
    <source>
    </source>
</evidence>
<evidence type="ECO:0000305" key="4"/>
<evidence type="ECO:0000305" key="5">
    <source>
    </source>
</evidence>
<evidence type="ECO:0000305" key="6">
    <source ref="5"/>
</evidence>
<evidence type="ECO:0007829" key="7">
    <source>
        <dbReference type="PDB" id="1YSJ"/>
    </source>
</evidence>
<accession>P54955</accession>
<feature type="chain" id="PRO_0000061962" description="N-acetylcysteine deacetylase">
    <location>
        <begin position="1"/>
        <end position="380"/>
    </location>
</feature>
<feature type="binding site" evidence="2">
    <location>
        <position position="98"/>
    </location>
    <ligand>
        <name>Ni(2+)</name>
        <dbReference type="ChEBI" id="CHEBI:49786"/>
        <label>1</label>
    </ligand>
</feature>
<feature type="binding site" evidence="2">
    <location>
        <position position="98"/>
    </location>
    <ligand>
        <name>Ni(2+)</name>
        <dbReference type="ChEBI" id="CHEBI:49786"/>
        <label>2</label>
    </ligand>
</feature>
<feature type="binding site" evidence="2">
    <location>
        <position position="100"/>
    </location>
    <ligand>
        <name>Ni(2+)</name>
        <dbReference type="ChEBI" id="CHEBI:49786"/>
        <label>2</label>
    </ligand>
</feature>
<feature type="binding site" evidence="2">
    <location>
        <position position="134"/>
    </location>
    <ligand>
        <name>Ni(2+)</name>
        <dbReference type="ChEBI" id="CHEBI:49786"/>
        <label>1</label>
    </ligand>
</feature>
<feature type="binding site" evidence="2">
    <location>
        <position position="158"/>
    </location>
    <ligand>
        <name>Ni(2+)</name>
        <dbReference type="ChEBI" id="CHEBI:49786"/>
        <label>2</label>
    </ligand>
</feature>
<feature type="binding site" evidence="2">
    <location>
        <position position="350"/>
    </location>
    <ligand>
        <name>Ni(2+)</name>
        <dbReference type="ChEBI" id="CHEBI:49786"/>
        <label>1</label>
    </ligand>
</feature>
<feature type="sequence conflict" description="In Ref. 1; BAA08332." evidence="4" ref="1">
    <original>G</original>
    <variation>A</variation>
    <location>
        <position position="54"/>
    </location>
</feature>
<feature type="sequence conflict" description="In Ref. 1; BAA08332." evidence="4" ref="1">
    <original>G</original>
    <variation>S</variation>
    <location>
        <position position="194"/>
    </location>
</feature>
<feature type="helix" evidence="7">
    <location>
        <begin position="4"/>
        <end position="19"/>
    </location>
</feature>
<feature type="helix" evidence="7">
    <location>
        <begin position="28"/>
        <end position="40"/>
    </location>
</feature>
<feature type="strand" evidence="7">
    <location>
        <begin position="55"/>
        <end position="60"/>
    </location>
</feature>
<feature type="strand" evidence="7">
    <location>
        <begin position="67"/>
        <end position="73"/>
    </location>
</feature>
<feature type="helix" evidence="7">
    <location>
        <begin position="100"/>
        <end position="115"/>
    </location>
</feature>
<feature type="helix" evidence="7">
    <location>
        <begin position="118"/>
        <end position="120"/>
    </location>
</feature>
<feature type="strand" evidence="7">
    <location>
        <begin position="122"/>
        <end position="131"/>
    </location>
</feature>
<feature type="turn" evidence="7">
    <location>
        <begin position="133"/>
        <end position="136"/>
    </location>
</feature>
<feature type="helix" evidence="7">
    <location>
        <begin position="138"/>
        <end position="144"/>
    </location>
</feature>
<feature type="turn" evidence="7">
    <location>
        <begin position="145"/>
        <end position="150"/>
    </location>
</feature>
<feature type="strand" evidence="7">
    <location>
        <begin position="151"/>
        <end position="160"/>
    </location>
</feature>
<feature type="strand" evidence="7">
    <location>
        <begin position="167"/>
        <end position="170"/>
    </location>
</feature>
<feature type="strand" evidence="7">
    <location>
        <begin position="172"/>
        <end position="176"/>
    </location>
</feature>
<feature type="strand" evidence="7">
    <location>
        <begin position="179"/>
        <end position="187"/>
    </location>
</feature>
<feature type="helix" evidence="7">
    <location>
        <begin position="202"/>
        <end position="213"/>
    </location>
</feature>
<feature type="strand" evidence="7">
    <location>
        <begin position="228"/>
        <end position="236"/>
    </location>
</feature>
<feature type="strand" evidence="7">
    <location>
        <begin position="240"/>
        <end position="242"/>
    </location>
</feature>
<feature type="strand" evidence="7">
    <location>
        <begin position="245"/>
        <end position="254"/>
    </location>
</feature>
<feature type="helix" evidence="7">
    <location>
        <begin position="258"/>
        <end position="278"/>
    </location>
</feature>
<feature type="strand" evidence="7">
    <location>
        <begin position="282"/>
        <end position="291"/>
    </location>
</feature>
<feature type="strand" evidence="7">
    <location>
        <begin position="294"/>
        <end position="296"/>
    </location>
</feature>
<feature type="helix" evidence="7">
    <location>
        <begin position="298"/>
        <end position="300"/>
    </location>
</feature>
<feature type="helix" evidence="7">
    <location>
        <begin position="301"/>
        <end position="310"/>
    </location>
</feature>
<feature type="strand" evidence="7">
    <location>
        <begin position="314"/>
        <end position="317"/>
    </location>
</feature>
<feature type="strand" evidence="7">
    <location>
        <begin position="321"/>
        <end position="323"/>
    </location>
</feature>
<feature type="helix" evidence="7">
    <location>
        <begin position="327"/>
        <end position="331"/>
    </location>
</feature>
<feature type="strand" evidence="7">
    <location>
        <begin position="336"/>
        <end position="342"/>
    </location>
</feature>
<feature type="helix" evidence="7">
    <location>
        <begin position="360"/>
        <end position="378"/>
    </location>
</feature>
<proteinExistence type="evidence at protein level"/>
<gene>
    <name evidence="3" type="primary">scmP</name>
    <name evidence="3" type="synonym">sndB</name>
    <name type="synonym">yxeP</name>
    <name type="ordered locus">BSU39470</name>
    <name type="ORF">LP9H</name>
</gene>
<comment type="function">
    <text evidence="1">Probably catalyzes the deacetylation of N-acetylcysteine (NAC) to acetate and cysteine. Is involved in a S-(2-succino)cysteine (2SC) degradation pathway that allows B.subtilis to grow on 2SC as a sole sulfur source, via its metabolization to cysteine.</text>
</comment>
<comment type="catalytic activity">
    <reaction evidence="5">
        <text>N-acetyl-L-cysteine + H2O = L-cysteine + acetate</text>
        <dbReference type="Rhea" id="RHEA:75515"/>
        <dbReference type="ChEBI" id="CHEBI:15377"/>
        <dbReference type="ChEBI" id="CHEBI:30089"/>
        <dbReference type="ChEBI" id="CHEBI:35235"/>
        <dbReference type="ChEBI" id="CHEBI:78236"/>
    </reaction>
    <physiologicalReaction direction="left-to-right" evidence="5">
        <dbReference type="Rhea" id="RHEA:75516"/>
    </physiologicalReaction>
</comment>
<comment type="cofactor">
    <cofactor evidence="6">
        <name>a divalent metal cation</name>
        <dbReference type="ChEBI" id="CHEBI:60240"/>
    </cofactor>
    <text evidence="2">Binds 2 divalent metal cations per subunit.</text>
</comment>
<comment type="pathway">
    <text evidence="5">Amino-acid biosynthesis; L-cysteine biosynthesis.</text>
</comment>
<comment type="disruption phenotype">
    <text evidence="1">Cells lacking this gene do not lose the ability to grow on 2SC as the sulfur source because of the presence of other deacetylases that can compensate for scmP (yxeP) deficiency. In a triple mutant lacking this gene, ytnL and yhaA, the levels of NAC highly increases after addition of 2SC.</text>
</comment>
<comment type="similarity">
    <text evidence="4">Belongs to the peptidase M20 family.</text>
</comment>
<reference key="1">
    <citation type="journal article" date="1995" name="DNA Res.">
        <title>Cloning and sequencing of a 23-kb region of the Bacillus subtilis genome between the iol and hut operons.</title>
        <authorList>
            <person name="Yoshida K."/>
            <person name="Fujimyra M."/>
            <person name="Yanai N."/>
            <person name="Fujita Y."/>
        </authorList>
    </citation>
    <scope>NUCLEOTIDE SEQUENCE [GENOMIC DNA]</scope>
    <source>
        <strain>168 / BGSC1A1</strain>
    </source>
</reference>
<reference key="2">
    <citation type="journal article" date="1997" name="Nature">
        <title>The complete genome sequence of the Gram-positive bacterium Bacillus subtilis.</title>
        <authorList>
            <person name="Kunst F."/>
            <person name="Ogasawara N."/>
            <person name="Moszer I."/>
            <person name="Albertini A.M."/>
            <person name="Alloni G."/>
            <person name="Azevedo V."/>
            <person name="Bertero M.G."/>
            <person name="Bessieres P."/>
            <person name="Bolotin A."/>
            <person name="Borchert S."/>
            <person name="Borriss R."/>
            <person name="Boursier L."/>
            <person name="Brans A."/>
            <person name="Braun M."/>
            <person name="Brignell S.C."/>
            <person name="Bron S."/>
            <person name="Brouillet S."/>
            <person name="Bruschi C.V."/>
            <person name="Caldwell B."/>
            <person name="Capuano V."/>
            <person name="Carter N.M."/>
            <person name="Choi S.-K."/>
            <person name="Codani J.-J."/>
            <person name="Connerton I.F."/>
            <person name="Cummings N.J."/>
            <person name="Daniel R.A."/>
            <person name="Denizot F."/>
            <person name="Devine K.M."/>
            <person name="Duesterhoeft A."/>
            <person name="Ehrlich S.D."/>
            <person name="Emmerson P.T."/>
            <person name="Entian K.-D."/>
            <person name="Errington J."/>
            <person name="Fabret C."/>
            <person name="Ferrari E."/>
            <person name="Foulger D."/>
            <person name="Fritz C."/>
            <person name="Fujita M."/>
            <person name="Fujita Y."/>
            <person name="Fuma S."/>
            <person name="Galizzi A."/>
            <person name="Galleron N."/>
            <person name="Ghim S.-Y."/>
            <person name="Glaser P."/>
            <person name="Goffeau A."/>
            <person name="Golightly E.J."/>
            <person name="Grandi G."/>
            <person name="Guiseppi G."/>
            <person name="Guy B.J."/>
            <person name="Haga K."/>
            <person name="Haiech J."/>
            <person name="Harwood C.R."/>
            <person name="Henaut A."/>
            <person name="Hilbert H."/>
            <person name="Holsappel S."/>
            <person name="Hosono S."/>
            <person name="Hullo M.-F."/>
            <person name="Itaya M."/>
            <person name="Jones L.-M."/>
            <person name="Joris B."/>
            <person name="Karamata D."/>
            <person name="Kasahara Y."/>
            <person name="Klaerr-Blanchard M."/>
            <person name="Klein C."/>
            <person name="Kobayashi Y."/>
            <person name="Koetter P."/>
            <person name="Koningstein G."/>
            <person name="Krogh S."/>
            <person name="Kumano M."/>
            <person name="Kurita K."/>
            <person name="Lapidus A."/>
            <person name="Lardinois S."/>
            <person name="Lauber J."/>
            <person name="Lazarevic V."/>
            <person name="Lee S.-M."/>
            <person name="Levine A."/>
            <person name="Liu H."/>
            <person name="Masuda S."/>
            <person name="Mauel C."/>
            <person name="Medigue C."/>
            <person name="Medina N."/>
            <person name="Mellado R.P."/>
            <person name="Mizuno M."/>
            <person name="Moestl D."/>
            <person name="Nakai S."/>
            <person name="Noback M."/>
            <person name="Noone D."/>
            <person name="O'Reilly M."/>
            <person name="Ogawa K."/>
            <person name="Ogiwara A."/>
            <person name="Oudega B."/>
            <person name="Park S.-H."/>
            <person name="Parro V."/>
            <person name="Pohl T.M."/>
            <person name="Portetelle D."/>
            <person name="Porwollik S."/>
            <person name="Prescott A.M."/>
            <person name="Presecan E."/>
            <person name="Pujic P."/>
            <person name="Purnelle B."/>
            <person name="Rapoport G."/>
            <person name="Rey M."/>
            <person name="Reynolds S."/>
            <person name="Rieger M."/>
            <person name="Rivolta C."/>
            <person name="Rocha E."/>
            <person name="Roche B."/>
            <person name="Rose M."/>
            <person name="Sadaie Y."/>
            <person name="Sato T."/>
            <person name="Scanlan E."/>
            <person name="Schleich S."/>
            <person name="Schroeter R."/>
            <person name="Scoffone F."/>
            <person name="Sekiguchi J."/>
            <person name="Sekowska A."/>
            <person name="Seror S.J."/>
            <person name="Serror P."/>
            <person name="Shin B.-S."/>
            <person name="Soldo B."/>
            <person name="Sorokin A."/>
            <person name="Tacconi E."/>
            <person name="Takagi T."/>
            <person name="Takahashi H."/>
            <person name="Takemaru K."/>
            <person name="Takeuchi M."/>
            <person name="Tamakoshi A."/>
            <person name="Tanaka T."/>
            <person name="Terpstra P."/>
            <person name="Tognoni A."/>
            <person name="Tosato V."/>
            <person name="Uchiyama S."/>
            <person name="Vandenbol M."/>
            <person name="Vannier F."/>
            <person name="Vassarotti A."/>
            <person name="Viari A."/>
            <person name="Wambutt R."/>
            <person name="Wedler E."/>
            <person name="Wedler H."/>
            <person name="Weitzenegger T."/>
            <person name="Winters P."/>
            <person name="Wipat A."/>
            <person name="Yamamoto H."/>
            <person name="Yamane K."/>
            <person name="Yasumoto K."/>
            <person name="Yata K."/>
            <person name="Yoshida K."/>
            <person name="Yoshikawa H.-F."/>
            <person name="Zumstein E."/>
            <person name="Yoshikawa H."/>
            <person name="Danchin A."/>
        </authorList>
    </citation>
    <scope>NUCLEOTIDE SEQUENCE [LARGE SCALE GENOMIC DNA]</scope>
    <source>
        <strain>168</strain>
    </source>
</reference>
<reference key="3">
    <citation type="journal article" date="2009" name="Microbiology">
        <title>From a consortium sequence to a unified sequence: the Bacillus subtilis 168 reference genome a decade later.</title>
        <authorList>
            <person name="Barbe V."/>
            <person name="Cruveiller S."/>
            <person name="Kunst F."/>
            <person name="Lenoble P."/>
            <person name="Meurice G."/>
            <person name="Sekowska A."/>
            <person name="Vallenet D."/>
            <person name="Wang T."/>
            <person name="Moszer I."/>
            <person name="Medigue C."/>
            <person name="Danchin A."/>
        </authorList>
    </citation>
    <scope>SEQUENCE REVISION TO 54 AND 194</scope>
</reference>
<reference key="4">
    <citation type="journal article" date="2018" name="J. Biol. Chem.">
        <title>Identification of a metabolic disposal route for the oncometabolite S-(2-succino)cysteine in Bacillus subtilis.</title>
        <authorList>
            <person name="Niehaus T.D."/>
            <person name="Folz J."/>
            <person name="McCarty D.R."/>
            <person name="Cooper A.J.L."/>
            <person name="Moraga Amador D."/>
            <person name="Fiehn O."/>
            <person name="Hanson A.D."/>
        </authorList>
    </citation>
    <scope>FUNCTION</scope>
    <scope>DISRUPTION PHENOTYPE</scope>
    <scope>PATHWAY</scope>
    <source>
        <strain>168</strain>
    </source>
</reference>
<reference key="5">
    <citation type="submission" date="2005-02" db="PDB data bank">
        <title>Structure of Bacillus subtilis YxeP protein, a dinuclear metal binding peptidase from M20 family.</title>
        <authorList>
            <person name="Minasov G."/>
            <person name="Shuvalova L."/>
            <person name="Brunzelle J.S."/>
            <person name="Collart F.R."/>
            <person name="Anderson W.F."/>
        </authorList>
    </citation>
    <scope>X-RAY CRYSTALLOGRAPHY (2.40 ANGSTROMS) IN COMPLEX WITH NICKEL</scope>
    <scope>COFACTOR</scope>
</reference>